<keyword id="KW-0378">Hydrolase</keyword>
<keyword id="KW-0546">Nucleotide metabolism</keyword>
<keyword id="KW-0547">Nucleotide-binding</keyword>
<dbReference type="EC" id="3.5.4.30" evidence="1"/>
<dbReference type="EMBL" id="CP001341">
    <property type="protein sequence ID" value="ACL41619.1"/>
    <property type="molecule type" value="Genomic_DNA"/>
</dbReference>
<dbReference type="RefSeq" id="WP_015938813.1">
    <property type="nucleotide sequence ID" value="NC_011886.1"/>
</dbReference>
<dbReference type="SMR" id="B8H717"/>
<dbReference type="STRING" id="452863.Achl_3664"/>
<dbReference type="KEGG" id="ach:Achl_3664"/>
<dbReference type="eggNOG" id="COG0717">
    <property type="taxonomic scope" value="Bacteria"/>
</dbReference>
<dbReference type="HOGENOM" id="CLU_087476_2_0_11"/>
<dbReference type="OrthoDB" id="9780956at2"/>
<dbReference type="UniPathway" id="UPA00610">
    <property type="reaction ID" value="UER00667"/>
</dbReference>
<dbReference type="Proteomes" id="UP000002505">
    <property type="component" value="Chromosome"/>
</dbReference>
<dbReference type="GO" id="GO:0033973">
    <property type="term" value="F:dCTP deaminase (dUMP-forming) activity"/>
    <property type="evidence" value="ECO:0007669"/>
    <property type="project" value="UniProtKB-UniRule"/>
</dbReference>
<dbReference type="GO" id="GO:0008829">
    <property type="term" value="F:dCTP deaminase activity"/>
    <property type="evidence" value="ECO:0007669"/>
    <property type="project" value="InterPro"/>
</dbReference>
<dbReference type="GO" id="GO:0000166">
    <property type="term" value="F:nucleotide binding"/>
    <property type="evidence" value="ECO:0007669"/>
    <property type="project" value="UniProtKB-KW"/>
</dbReference>
<dbReference type="GO" id="GO:0006226">
    <property type="term" value="P:dUMP biosynthetic process"/>
    <property type="evidence" value="ECO:0007669"/>
    <property type="project" value="UniProtKB-UniRule"/>
</dbReference>
<dbReference type="GO" id="GO:0006229">
    <property type="term" value="P:dUTP biosynthetic process"/>
    <property type="evidence" value="ECO:0007669"/>
    <property type="project" value="InterPro"/>
</dbReference>
<dbReference type="GO" id="GO:0015949">
    <property type="term" value="P:nucleobase-containing small molecule interconversion"/>
    <property type="evidence" value="ECO:0007669"/>
    <property type="project" value="TreeGrafter"/>
</dbReference>
<dbReference type="CDD" id="cd07557">
    <property type="entry name" value="trimeric_dUTPase"/>
    <property type="match status" value="1"/>
</dbReference>
<dbReference type="FunFam" id="2.70.40.10:FF:000005">
    <property type="entry name" value="dCTP deaminase, dUMP-forming"/>
    <property type="match status" value="1"/>
</dbReference>
<dbReference type="Gene3D" id="2.70.40.10">
    <property type="match status" value="1"/>
</dbReference>
<dbReference type="HAMAP" id="MF_00146">
    <property type="entry name" value="dCTP_deaminase"/>
    <property type="match status" value="1"/>
</dbReference>
<dbReference type="InterPro" id="IPR011962">
    <property type="entry name" value="dCTP_deaminase"/>
</dbReference>
<dbReference type="InterPro" id="IPR036157">
    <property type="entry name" value="dUTPase-like_sf"/>
</dbReference>
<dbReference type="InterPro" id="IPR033704">
    <property type="entry name" value="dUTPase_trimeric"/>
</dbReference>
<dbReference type="NCBIfam" id="TIGR02274">
    <property type="entry name" value="dCTP_deam"/>
    <property type="match status" value="1"/>
</dbReference>
<dbReference type="PANTHER" id="PTHR42680">
    <property type="entry name" value="DCTP DEAMINASE"/>
    <property type="match status" value="1"/>
</dbReference>
<dbReference type="PANTHER" id="PTHR42680:SF3">
    <property type="entry name" value="DCTP DEAMINASE"/>
    <property type="match status" value="1"/>
</dbReference>
<dbReference type="Pfam" id="PF22769">
    <property type="entry name" value="DCD"/>
    <property type="match status" value="1"/>
</dbReference>
<dbReference type="SUPFAM" id="SSF51283">
    <property type="entry name" value="dUTPase-like"/>
    <property type="match status" value="1"/>
</dbReference>
<comment type="function">
    <text evidence="1">Bifunctional enzyme that catalyzes both the deamination of dCTP to dUTP and the hydrolysis of dUTP to dUMP without releasing the toxic dUTP intermediate.</text>
</comment>
<comment type="catalytic activity">
    <reaction evidence="1">
        <text>dCTP + 2 H2O = dUMP + NH4(+) + diphosphate</text>
        <dbReference type="Rhea" id="RHEA:19205"/>
        <dbReference type="ChEBI" id="CHEBI:15377"/>
        <dbReference type="ChEBI" id="CHEBI:28938"/>
        <dbReference type="ChEBI" id="CHEBI:33019"/>
        <dbReference type="ChEBI" id="CHEBI:61481"/>
        <dbReference type="ChEBI" id="CHEBI:246422"/>
        <dbReference type="EC" id="3.5.4.30"/>
    </reaction>
</comment>
<comment type="pathway">
    <text evidence="1">Pyrimidine metabolism; dUMP biosynthesis; dUMP from dCTP: step 1/1.</text>
</comment>
<comment type="subunit">
    <text evidence="1">Homotrimer.</text>
</comment>
<comment type="similarity">
    <text evidence="1">Belongs to the dCTP deaminase family.</text>
</comment>
<evidence type="ECO:0000255" key="1">
    <source>
        <dbReference type="HAMAP-Rule" id="MF_00146"/>
    </source>
</evidence>
<evidence type="ECO:0000256" key="2">
    <source>
        <dbReference type="SAM" id="MobiDB-lite"/>
    </source>
</evidence>
<organism>
    <name type="scientific">Pseudarthrobacter chlorophenolicus (strain ATCC 700700 / DSM 12829 / CIP 107037 / JCM 12360 / KCTC 9906 / NCIMB 13794 / A6)</name>
    <name type="common">Arthrobacter chlorophenolicus</name>
    <dbReference type="NCBI Taxonomy" id="452863"/>
    <lineage>
        <taxon>Bacteria</taxon>
        <taxon>Bacillati</taxon>
        <taxon>Actinomycetota</taxon>
        <taxon>Actinomycetes</taxon>
        <taxon>Micrococcales</taxon>
        <taxon>Micrococcaceae</taxon>
        <taxon>Pseudarthrobacter</taxon>
    </lineage>
</organism>
<gene>
    <name evidence="1" type="primary">dcd</name>
    <name type="ordered locus">Achl_3664</name>
</gene>
<sequence length="191" mass="21518">MLISDRDIRAEIDSQRIVLEPFEPAMVQPSSVDVRIDKFFRLFDNHKYAHIDPAQEQPELTRLVEVEQDEAFILHPGEFVLGSTYETVTLPDDIAARLEGKSSLGRLGLLTHSTAGFIDPGFSGHVTLELSNMATLPIKLWPGMKIGQLCFFRLSSSAEFPYGQGEYGNRYQGQRGPTASRSHLNFHRTRI</sequence>
<reference key="1">
    <citation type="submission" date="2009-01" db="EMBL/GenBank/DDBJ databases">
        <title>Complete sequence of chromosome of Arthrobacter chlorophenolicus A6.</title>
        <authorList>
            <consortium name="US DOE Joint Genome Institute"/>
            <person name="Lucas S."/>
            <person name="Copeland A."/>
            <person name="Lapidus A."/>
            <person name="Glavina del Rio T."/>
            <person name="Tice H."/>
            <person name="Bruce D."/>
            <person name="Goodwin L."/>
            <person name="Pitluck S."/>
            <person name="Goltsman E."/>
            <person name="Clum A."/>
            <person name="Larimer F."/>
            <person name="Land M."/>
            <person name="Hauser L."/>
            <person name="Kyrpides N."/>
            <person name="Mikhailova N."/>
            <person name="Jansson J."/>
            <person name="Richardson P."/>
        </authorList>
    </citation>
    <scope>NUCLEOTIDE SEQUENCE [LARGE SCALE GENOMIC DNA]</scope>
    <source>
        <strain>ATCC 700700 / DSM 12829 / CIP 107037 / JCM 12360 / KCTC 9906 / NCIMB 13794 / A6</strain>
    </source>
</reference>
<proteinExistence type="inferred from homology"/>
<accession>B8H717</accession>
<feature type="chain" id="PRO_1000123136" description="dCTP deaminase, dUMP-forming">
    <location>
        <begin position="1"/>
        <end position="191"/>
    </location>
</feature>
<feature type="region of interest" description="Disordered" evidence="2">
    <location>
        <begin position="169"/>
        <end position="191"/>
    </location>
</feature>
<feature type="compositionally biased region" description="Polar residues" evidence="2">
    <location>
        <begin position="171"/>
        <end position="183"/>
    </location>
</feature>
<feature type="active site" description="Proton donor/acceptor" evidence="1">
    <location>
        <position position="129"/>
    </location>
</feature>
<feature type="binding site" evidence="1">
    <location>
        <begin position="101"/>
        <end position="106"/>
    </location>
    <ligand>
        <name>dCTP</name>
        <dbReference type="ChEBI" id="CHEBI:61481"/>
    </ligand>
</feature>
<feature type="binding site" evidence="1">
    <location>
        <position position="119"/>
    </location>
    <ligand>
        <name>dCTP</name>
        <dbReference type="ChEBI" id="CHEBI:61481"/>
    </ligand>
</feature>
<feature type="binding site" evidence="1">
    <location>
        <begin position="127"/>
        <end position="129"/>
    </location>
    <ligand>
        <name>dCTP</name>
        <dbReference type="ChEBI" id="CHEBI:61481"/>
    </ligand>
</feature>
<feature type="binding site" evidence="1">
    <location>
        <position position="148"/>
    </location>
    <ligand>
        <name>dCTP</name>
        <dbReference type="ChEBI" id="CHEBI:61481"/>
    </ligand>
</feature>
<feature type="binding site" evidence="1">
    <location>
        <position position="162"/>
    </location>
    <ligand>
        <name>dCTP</name>
        <dbReference type="ChEBI" id="CHEBI:61481"/>
    </ligand>
</feature>
<feature type="binding site" evidence="1">
    <location>
        <position position="174"/>
    </location>
    <ligand>
        <name>dCTP</name>
        <dbReference type="ChEBI" id="CHEBI:61481"/>
    </ligand>
</feature>
<feature type="site" description="Important for bifunctional activity" evidence="1">
    <location>
        <begin position="116"/>
        <end position="117"/>
    </location>
</feature>
<name>DCDB_PSECP</name>
<protein>
    <recommendedName>
        <fullName evidence="1">dCTP deaminase, dUMP-forming</fullName>
        <ecNumber evidence="1">3.5.4.30</ecNumber>
    </recommendedName>
    <alternativeName>
        <fullName evidence="1">Bifunctional dCTP deaminase:dUTPase</fullName>
    </alternativeName>
    <alternativeName>
        <fullName evidence="1">DCD-DUT</fullName>
    </alternativeName>
</protein>